<gene>
    <name evidence="1" type="primary">hldE</name>
    <name type="ordered locus">BWG_2763</name>
</gene>
<evidence type="ECO:0000255" key="1">
    <source>
        <dbReference type="HAMAP-Rule" id="MF_01603"/>
    </source>
</evidence>
<comment type="function">
    <text evidence="1">Catalyzes the phosphorylation of D-glycero-D-manno-heptose 7-phosphate at the C-1 position to selectively form D-glycero-beta-D-manno-heptose-1,7-bisphosphate.</text>
</comment>
<comment type="function">
    <text evidence="1">Catalyzes the ADP transfer from ATP to D-glycero-beta-D-manno-heptose 1-phosphate, yielding ADP-D-glycero-beta-D-manno-heptose.</text>
</comment>
<comment type="catalytic activity">
    <reaction evidence="1">
        <text>D-glycero-beta-D-manno-heptose 7-phosphate + ATP = D-glycero-beta-D-manno-heptose 1,7-bisphosphate + ADP + H(+)</text>
        <dbReference type="Rhea" id="RHEA:27473"/>
        <dbReference type="ChEBI" id="CHEBI:15378"/>
        <dbReference type="ChEBI" id="CHEBI:30616"/>
        <dbReference type="ChEBI" id="CHEBI:60204"/>
        <dbReference type="ChEBI" id="CHEBI:60208"/>
        <dbReference type="ChEBI" id="CHEBI:456216"/>
        <dbReference type="EC" id="2.7.1.167"/>
    </reaction>
</comment>
<comment type="catalytic activity">
    <reaction evidence="1">
        <text>D-glycero-beta-D-manno-heptose 1-phosphate + ATP + H(+) = ADP-D-glycero-beta-D-manno-heptose + diphosphate</text>
        <dbReference type="Rhea" id="RHEA:27465"/>
        <dbReference type="ChEBI" id="CHEBI:15378"/>
        <dbReference type="ChEBI" id="CHEBI:30616"/>
        <dbReference type="ChEBI" id="CHEBI:33019"/>
        <dbReference type="ChEBI" id="CHEBI:59967"/>
        <dbReference type="ChEBI" id="CHEBI:61593"/>
        <dbReference type="EC" id="2.7.7.70"/>
    </reaction>
</comment>
<comment type="pathway">
    <text evidence="1">Nucleotide-sugar biosynthesis; ADP-L-glycero-beta-D-manno-heptose biosynthesis; ADP-L-glycero-beta-D-manno-heptose from D-glycero-beta-D-manno-heptose 7-phosphate: step 1/4.</text>
</comment>
<comment type="pathway">
    <text evidence="1">Nucleotide-sugar biosynthesis; ADP-L-glycero-beta-D-manno-heptose biosynthesis; ADP-L-glycero-beta-D-manno-heptose from D-glycero-beta-D-manno-heptose 7-phosphate: step 3/4.</text>
</comment>
<comment type="subunit">
    <text evidence="1">Homodimer.</text>
</comment>
<comment type="similarity">
    <text evidence="1">In the N-terminal section; belongs to the carbohydrate kinase PfkB family.</text>
</comment>
<comment type="similarity">
    <text evidence="1">In the C-terminal section; belongs to the cytidylyltransferase family.</text>
</comment>
<reference key="1">
    <citation type="journal article" date="2009" name="J. Bacteriol.">
        <title>Genomic sequencing reveals regulatory mutations and recombinational events in the widely used MC4100 lineage of Escherichia coli K-12.</title>
        <authorList>
            <person name="Ferenci T."/>
            <person name="Zhou Z."/>
            <person name="Betteridge T."/>
            <person name="Ren Y."/>
            <person name="Liu Y."/>
            <person name="Feng L."/>
            <person name="Reeves P.R."/>
            <person name="Wang L."/>
        </authorList>
    </citation>
    <scope>NUCLEOTIDE SEQUENCE [LARGE SCALE GENOMIC DNA]</scope>
    <source>
        <strain>K12 / MC4100 / BW2952</strain>
    </source>
</reference>
<feature type="chain" id="PRO_1000215692" description="Bifunctional protein HldE">
    <location>
        <begin position="1"/>
        <end position="477"/>
    </location>
</feature>
<feature type="region of interest" description="Ribokinase">
    <location>
        <begin position="1"/>
        <end position="318"/>
    </location>
</feature>
<feature type="region of interest" description="Cytidylyltransferase">
    <location>
        <begin position="344"/>
        <end position="477"/>
    </location>
</feature>
<feature type="active site" evidence="1">
    <location>
        <position position="264"/>
    </location>
</feature>
<feature type="binding site" evidence="1">
    <location>
        <begin position="195"/>
        <end position="198"/>
    </location>
    <ligand>
        <name>ATP</name>
        <dbReference type="ChEBI" id="CHEBI:30616"/>
    </ligand>
</feature>
<feature type="modified residue" description="N6-acetyllysine" evidence="1">
    <location>
        <position position="179"/>
    </location>
</feature>
<keyword id="KW-0007">Acetylation</keyword>
<keyword id="KW-0067">ATP-binding</keyword>
<keyword id="KW-0119">Carbohydrate metabolism</keyword>
<keyword id="KW-0418">Kinase</keyword>
<keyword id="KW-0511">Multifunctional enzyme</keyword>
<keyword id="KW-0547">Nucleotide-binding</keyword>
<keyword id="KW-0548">Nucleotidyltransferase</keyword>
<keyword id="KW-0808">Transferase</keyword>
<sequence>MKVTLPEFERAGVMVVGDVMLDRYWYGPTSRISPEAPVPVVKVNTIEERPGGAANVAMNIASLGANARLVGLTGIDDAARALSKSLADVNVKCDFVSVPTHPTITKLRVLSRNQQLIRLDFEEGFEGVDPQPLHERINQALSSIGALVLSDYAKGALASVQQMIQLARKAGVPVLIDPKGTDFERYRGATLLTPNLSEFEAVVGKCKTEEEIVERGMKLIADYELSALLVTRSEQGMSLLQPGKAPLHMPTQAQEVYDVTGAGDTVIGVLAATLAAGNSLEEACFFANAAAGVVVGKLGTSTVSPIELENAVRGRADTGFGVMTEEELKLAVAAARKRGEKVVMTNGVFDILHAGHVSYLANARKLGDRLIVAVNSDASTKRLKGDSRPVNPLEQRMIVLGALEAVDWVVSFEEDTPQRLIAGILPDLLVKGGDYKPEEIAGSKEVWANGGEVLVLNFEDGCSTTNIIKKIQQDKKG</sequence>
<dbReference type="EC" id="2.7.1.167" evidence="1"/>
<dbReference type="EC" id="2.7.7.70" evidence="1"/>
<dbReference type="EMBL" id="CP001396">
    <property type="protein sequence ID" value="ACR63195.1"/>
    <property type="molecule type" value="Genomic_DNA"/>
</dbReference>
<dbReference type="RefSeq" id="WP_000869178.1">
    <property type="nucleotide sequence ID" value="NC_012759.1"/>
</dbReference>
<dbReference type="SMR" id="C4ZQW9"/>
<dbReference type="GeneID" id="75205361"/>
<dbReference type="KEGG" id="ebw:BWG_2763"/>
<dbReference type="HOGENOM" id="CLU_021150_2_1_6"/>
<dbReference type="UniPathway" id="UPA00356">
    <property type="reaction ID" value="UER00437"/>
</dbReference>
<dbReference type="UniPathway" id="UPA00356">
    <property type="reaction ID" value="UER00439"/>
</dbReference>
<dbReference type="GO" id="GO:0005829">
    <property type="term" value="C:cytosol"/>
    <property type="evidence" value="ECO:0007669"/>
    <property type="project" value="TreeGrafter"/>
</dbReference>
<dbReference type="GO" id="GO:0005524">
    <property type="term" value="F:ATP binding"/>
    <property type="evidence" value="ECO:0007669"/>
    <property type="project" value="UniProtKB-UniRule"/>
</dbReference>
<dbReference type="GO" id="GO:0033785">
    <property type="term" value="F:heptose 7-phosphate kinase activity"/>
    <property type="evidence" value="ECO:0007669"/>
    <property type="project" value="UniProtKB-UniRule"/>
</dbReference>
<dbReference type="GO" id="GO:0033786">
    <property type="term" value="F:heptose-1-phosphate adenylyltransferase activity"/>
    <property type="evidence" value="ECO:0007669"/>
    <property type="project" value="UniProtKB-UniRule"/>
</dbReference>
<dbReference type="GO" id="GO:0016773">
    <property type="term" value="F:phosphotransferase activity, alcohol group as acceptor"/>
    <property type="evidence" value="ECO:0007669"/>
    <property type="project" value="InterPro"/>
</dbReference>
<dbReference type="GO" id="GO:0097171">
    <property type="term" value="P:ADP-L-glycero-beta-D-manno-heptose biosynthetic process"/>
    <property type="evidence" value="ECO:0007669"/>
    <property type="project" value="UniProtKB-UniPathway"/>
</dbReference>
<dbReference type="CDD" id="cd01172">
    <property type="entry name" value="RfaE_like"/>
    <property type="match status" value="1"/>
</dbReference>
<dbReference type="FunFam" id="3.40.1190.20:FF:000002">
    <property type="entry name" value="Bifunctional protein HldE"/>
    <property type="match status" value="1"/>
</dbReference>
<dbReference type="FunFam" id="3.40.50.620:FF:000028">
    <property type="entry name" value="Bifunctional protein HldE"/>
    <property type="match status" value="1"/>
</dbReference>
<dbReference type="Gene3D" id="3.40.1190.20">
    <property type="match status" value="1"/>
</dbReference>
<dbReference type="Gene3D" id="3.40.50.620">
    <property type="entry name" value="HUPs"/>
    <property type="match status" value="1"/>
</dbReference>
<dbReference type="HAMAP" id="MF_01603">
    <property type="entry name" value="HldE"/>
    <property type="match status" value="1"/>
</dbReference>
<dbReference type="InterPro" id="IPR023030">
    <property type="entry name" value="Bifunc_HldE"/>
</dbReference>
<dbReference type="InterPro" id="IPR002173">
    <property type="entry name" value="Carboh/pur_kinase_PfkB_CS"/>
</dbReference>
<dbReference type="InterPro" id="IPR004821">
    <property type="entry name" value="Cyt_trans-like"/>
</dbReference>
<dbReference type="InterPro" id="IPR011611">
    <property type="entry name" value="PfkB_dom"/>
</dbReference>
<dbReference type="InterPro" id="IPR011913">
    <property type="entry name" value="RfaE_dom_I"/>
</dbReference>
<dbReference type="InterPro" id="IPR011914">
    <property type="entry name" value="RfaE_dom_II"/>
</dbReference>
<dbReference type="InterPro" id="IPR029056">
    <property type="entry name" value="Ribokinase-like"/>
</dbReference>
<dbReference type="InterPro" id="IPR014729">
    <property type="entry name" value="Rossmann-like_a/b/a_fold"/>
</dbReference>
<dbReference type="NCBIfam" id="TIGR00125">
    <property type="entry name" value="cyt_tran_rel"/>
    <property type="match status" value="1"/>
</dbReference>
<dbReference type="NCBIfam" id="NF008454">
    <property type="entry name" value="PRK11316.1"/>
    <property type="match status" value="1"/>
</dbReference>
<dbReference type="NCBIfam" id="TIGR02198">
    <property type="entry name" value="rfaE_dom_I"/>
    <property type="match status" value="1"/>
</dbReference>
<dbReference type="NCBIfam" id="TIGR02199">
    <property type="entry name" value="rfaE_dom_II"/>
    <property type="match status" value="1"/>
</dbReference>
<dbReference type="PANTHER" id="PTHR46969">
    <property type="entry name" value="BIFUNCTIONAL PROTEIN HLDE"/>
    <property type="match status" value="1"/>
</dbReference>
<dbReference type="PANTHER" id="PTHR46969:SF1">
    <property type="entry name" value="BIFUNCTIONAL PROTEIN HLDE"/>
    <property type="match status" value="1"/>
</dbReference>
<dbReference type="Pfam" id="PF01467">
    <property type="entry name" value="CTP_transf_like"/>
    <property type="match status" value="1"/>
</dbReference>
<dbReference type="Pfam" id="PF00294">
    <property type="entry name" value="PfkB"/>
    <property type="match status" value="1"/>
</dbReference>
<dbReference type="SUPFAM" id="SSF52374">
    <property type="entry name" value="Nucleotidylyl transferase"/>
    <property type="match status" value="1"/>
</dbReference>
<dbReference type="SUPFAM" id="SSF53613">
    <property type="entry name" value="Ribokinase-like"/>
    <property type="match status" value="1"/>
</dbReference>
<dbReference type="PROSITE" id="PS00583">
    <property type="entry name" value="PFKB_KINASES_1"/>
    <property type="match status" value="1"/>
</dbReference>
<organism>
    <name type="scientific">Escherichia coli (strain K12 / MC4100 / BW2952)</name>
    <dbReference type="NCBI Taxonomy" id="595496"/>
    <lineage>
        <taxon>Bacteria</taxon>
        <taxon>Pseudomonadati</taxon>
        <taxon>Pseudomonadota</taxon>
        <taxon>Gammaproteobacteria</taxon>
        <taxon>Enterobacterales</taxon>
        <taxon>Enterobacteriaceae</taxon>
        <taxon>Escherichia</taxon>
    </lineage>
</organism>
<accession>C4ZQW9</accession>
<protein>
    <recommendedName>
        <fullName evidence="1">Bifunctional protein HldE</fullName>
    </recommendedName>
    <domain>
        <recommendedName>
            <fullName evidence="1">D-beta-D-heptose 7-phosphate kinase</fullName>
            <ecNumber evidence="1">2.7.1.167</ecNumber>
        </recommendedName>
        <alternativeName>
            <fullName evidence="1">D-beta-D-heptose 7-phosphotransferase</fullName>
        </alternativeName>
        <alternativeName>
            <fullName evidence="1">D-glycero-beta-D-manno-heptose-7-phosphate kinase</fullName>
        </alternativeName>
    </domain>
    <domain>
        <recommendedName>
            <fullName evidence="1">D-beta-D-heptose 1-phosphate adenylyltransferase</fullName>
            <ecNumber evidence="1">2.7.7.70</ecNumber>
        </recommendedName>
        <alternativeName>
            <fullName evidence="1">D-glycero-beta-D-manno-heptose 1-phosphate adenylyltransferase</fullName>
        </alternativeName>
    </domain>
</protein>
<proteinExistence type="inferred from homology"/>
<name>HLDE_ECOBW</name>